<gene>
    <name type="primary">chs7</name>
    <name type="ORF">ACLA_023530</name>
</gene>
<accession>A1CPR8</accession>
<name>CHS7_ASPCL</name>
<sequence length="332" mass="36847">MGFGDFDSICAKTALPLCSLVGPSSSSISGSTGIISNCYARNVELANTIIFEGAASFVHIIALAMTVIMILHVRSKFTAVGRKEIITFFYIYMALTICSLVIDAGVVPPRSGPFPYFVAAQNGLASALCTCLLVNGFVGFQLYEDGTFLSVWLLRLTSAVMFVVSFLISILTFKSWGGMSPTNTIGLFVVLYILNALCIAIYLVMQLLLVMNTLEDRWPLGHIAFGVIVFICGQVLLYAFSDTICDNVQHYLDGLFFATFCNLLAVMMVYKFWDYITKEDLEFSVGIKPNTWEVKELLPEEDRRTTAYQDSHSEYAGSMYHHRASTYGNQNY</sequence>
<proteinExistence type="inferred from homology"/>
<reference key="1">
    <citation type="journal article" date="2008" name="PLoS Genet.">
        <title>Genomic islands in the pathogenic filamentous fungus Aspergillus fumigatus.</title>
        <authorList>
            <person name="Fedorova N.D."/>
            <person name="Khaldi N."/>
            <person name="Joardar V.S."/>
            <person name="Maiti R."/>
            <person name="Amedeo P."/>
            <person name="Anderson M.J."/>
            <person name="Crabtree J."/>
            <person name="Silva J.C."/>
            <person name="Badger J.H."/>
            <person name="Albarraq A."/>
            <person name="Angiuoli S."/>
            <person name="Bussey H."/>
            <person name="Bowyer P."/>
            <person name="Cotty P.J."/>
            <person name="Dyer P.S."/>
            <person name="Egan A."/>
            <person name="Galens K."/>
            <person name="Fraser-Liggett C.M."/>
            <person name="Haas B.J."/>
            <person name="Inman J.M."/>
            <person name="Kent R."/>
            <person name="Lemieux S."/>
            <person name="Malavazi I."/>
            <person name="Orvis J."/>
            <person name="Roemer T."/>
            <person name="Ronning C.M."/>
            <person name="Sundaram J.P."/>
            <person name="Sutton G."/>
            <person name="Turner G."/>
            <person name="Venter J.C."/>
            <person name="White O.R."/>
            <person name="Whitty B.R."/>
            <person name="Youngman P."/>
            <person name="Wolfe K.H."/>
            <person name="Goldman G.H."/>
            <person name="Wortman J.R."/>
            <person name="Jiang B."/>
            <person name="Denning D.W."/>
            <person name="Nierman W.C."/>
        </authorList>
    </citation>
    <scope>NUCLEOTIDE SEQUENCE [LARGE SCALE GENOMIC DNA]</scope>
    <source>
        <strain>ATCC 1007 / CBS 513.65 / DSM 816 / NCTC 3887 / NRRL 1 / QM 1276 / 107</strain>
    </source>
</reference>
<organism>
    <name type="scientific">Aspergillus clavatus (strain ATCC 1007 / CBS 513.65 / DSM 816 / NCTC 3887 / NRRL 1 / QM 1276 / 107)</name>
    <dbReference type="NCBI Taxonomy" id="344612"/>
    <lineage>
        <taxon>Eukaryota</taxon>
        <taxon>Fungi</taxon>
        <taxon>Dikarya</taxon>
        <taxon>Ascomycota</taxon>
        <taxon>Pezizomycotina</taxon>
        <taxon>Eurotiomycetes</taxon>
        <taxon>Eurotiomycetidae</taxon>
        <taxon>Eurotiales</taxon>
        <taxon>Aspergillaceae</taxon>
        <taxon>Aspergillus</taxon>
        <taxon>Aspergillus subgen. Fumigati</taxon>
    </lineage>
</organism>
<protein>
    <recommendedName>
        <fullName>Chitin synthase export chaperone</fullName>
    </recommendedName>
</protein>
<comment type="function">
    <text evidence="1">Chaperone required for the export of the chitin synthase chs3 from the endoplasmic reticulum.</text>
</comment>
<comment type="subunit">
    <text evidence="1">Interacts with chs3.</text>
</comment>
<comment type="subcellular location">
    <subcellularLocation>
        <location evidence="1">Endoplasmic reticulum membrane</location>
        <topology evidence="1">Multi-pass membrane protein</topology>
    </subcellularLocation>
</comment>
<comment type="similarity">
    <text evidence="3">Belongs to the CHS7 family.</text>
</comment>
<dbReference type="EMBL" id="DS027059">
    <property type="protein sequence ID" value="EAW07639.1"/>
    <property type="molecule type" value="Genomic_DNA"/>
</dbReference>
<dbReference type="RefSeq" id="XP_001269065.1">
    <property type="nucleotide sequence ID" value="XM_001269064.1"/>
</dbReference>
<dbReference type="STRING" id="344612.A1CPR8"/>
<dbReference type="EnsemblFungi" id="EAW07639">
    <property type="protein sequence ID" value="EAW07639"/>
    <property type="gene ID" value="ACLA_023530"/>
</dbReference>
<dbReference type="GeneID" id="4701778"/>
<dbReference type="KEGG" id="act:ACLA_023530"/>
<dbReference type="VEuPathDB" id="FungiDB:ACLA_023530"/>
<dbReference type="eggNOG" id="ENOG502QRVH">
    <property type="taxonomic scope" value="Eukaryota"/>
</dbReference>
<dbReference type="HOGENOM" id="CLU_050424_1_1_1"/>
<dbReference type="OMA" id="TVWEVKD"/>
<dbReference type="OrthoDB" id="2189463at2759"/>
<dbReference type="Proteomes" id="UP000006701">
    <property type="component" value="Unassembled WGS sequence"/>
</dbReference>
<dbReference type="GO" id="GO:0005789">
    <property type="term" value="C:endoplasmic reticulum membrane"/>
    <property type="evidence" value="ECO:0007669"/>
    <property type="project" value="UniProtKB-SubCell"/>
</dbReference>
<dbReference type="GO" id="GO:0051082">
    <property type="term" value="F:unfolded protein binding"/>
    <property type="evidence" value="ECO:0007669"/>
    <property type="project" value="TreeGrafter"/>
</dbReference>
<dbReference type="GO" id="GO:0071555">
    <property type="term" value="P:cell wall organization"/>
    <property type="evidence" value="ECO:0007669"/>
    <property type="project" value="UniProtKB-KW"/>
</dbReference>
<dbReference type="GO" id="GO:0006457">
    <property type="term" value="P:protein folding"/>
    <property type="evidence" value="ECO:0007669"/>
    <property type="project" value="TreeGrafter"/>
</dbReference>
<dbReference type="GO" id="GO:0015031">
    <property type="term" value="P:protein transport"/>
    <property type="evidence" value="ECO:0007669"/>
    <property type="project" value="UniProtKB-KW"/>
</dbReference>
<dbReference type="InterPro" id="IPR022057">
    <property type="entry name" value="Chs7"/>
</dbReference>
<dbReference type="PANTHER" id="PTHR35329">
    <property type="entry name" value="CHITIN SYNTHASE EXPORT CHAPERONE"/>
    <property type="match status" value="1"/>
</dbReference>
<dbReference type="PANTHER" id="PTHR35329:SF2">
    <property type="entry name" value="CHITIN SYNTHASE EXPORT CHAPERONE"/>
    <property type="match status" value="1"/>
</dbReference>
<dbReference type="Pfam" id="PF12271">
    <property type="entry name" value="Chs7"/>
    <property type="match status" value="1"/>
</dbReference>
<feature type="chain" id="PRO_0000280568" description="Chitin synthase export chaperone">
    <location>
        <begin position="1"/>
        <end position="332"/>
    </location>
</feature>
<feature type="transmembrane region" description="Helical" evidence="2">
    <location>
        <begin position="49"/>
        <end position="69"/>
    </location>
</feature>
<feature type="transmembrane region" description="Helical" evidence="2">
    <location>
        <begin position="85"/>
        <end position="105"/>
    </location>
</feature>
<feature type="transmembrane region" description="Helical" evidence="2">
    <location>
        <begin position="123"/>
        <end position="143"/>
    </location>
</feature>
<feature type="transmembrane region" description="Helical" evidence="2">
    <location>
        <begin position="151"/>
        <end position="171"/>
    </location>
</feature>
<feature type="transmembrane region" description="Helical" evidence="2">
    <location>
        <begin position="185"/>
        <end position="205"/>
    </location>
</feature>
<feature type="transmembrane region" description="Helical" evidence="2">
    <location>
        <begin position="220"/>
        <end position="240"/>
    </location>
</feature>
<feature type="transmembrane region" description="Helical" evidence="2">
    <location>
        <begin position="250"/>
        <end position="270"/>
    </location>
</feature>
<evidence type="ECO:0000250" key="1"/>
<evidence type="ECO:0000255" key="2"/>
<evidence type="ECO:0000305" key="3"/>
<keyword id="KW-0961">Cell wall biogenesis/degradation</keyword>
<keyword id="KW-0256">Endoplasmic reticulum</keyword>
<keyword id="KW-0472">Membrane</keyword>
<keyword id="KW-0653">Protein transport</keyword>
<keyword id="KW-1185">Reference proteome</keyword>
<keyword id="KW-0812">Transmembrane</keyword>
<keyword id="KW-1133">Transmembrane helix</keyword>
<keyword id="KW-0813">Transport</keyword>